<feature type="chain" id="PRO_1000203014" description="Elongation factor Tu">
    <location>
        <begin position="1"/>
        <end position="399"/>
    </location>
</feature>
<feature type="domain" description="tr-type G">
    <location>
        <begin position="10"/>
        <end position="207"/>
    </location>
</feature>
<feature type="region of interest" description="G1" evidence="1">
    <location>
        <begin position="19"/>
        <end position="26"/>
    </location>
</feature>
<feature type="region of interest" description="G2" evidence="1">
    <location>
        <begin position="60"/>
        <end position="64"/>
    </location>
</feature>
<feature type="region of interest" description="G3" evidence="1">
    <location>
        <begin position="81"/>
        <end position="84"/>
    </location>
</feature>
<feature type="region of interest" description="G4" evidence="1">
    <location>
        <begin position="136"/>
        <end position="139"/>
    </location>
</feature>
<feature type="region of interest" description="G5" evidence="1">
    <location>
        <begin position="174"/>
        <end position="176"/>
    </location>
</feature>
<feature type="binding site" evidence="2">
    <location>
        <begin position="19"/>
        <end position="26"/>
    </location>
    <ligand>
        <name>GTP</name>
        <dbReference type="ChEBI" id="CHEBI:37565"/>
    </ligand>
</feature>
<feature type="binding site" evidence="2">
    <location>
        <position position="26"/>
    </location>
    <ligand>
        <name>Mg(2+)</name>
        <dbReference type="ChEBI" id="CHEBI:18420"/>
    </ligand>
</feature>
<feature type="binding site" evidence="2">
    <location>
        <begin position="81"/>
        <end position="85"/>
    </location>
    <ligand>
        <name>GTP</name>
        <dbReference type="ChEBI" id="CHEBI:37565"/>
    </ligand>
</feature>
<feature type="binding site" evidence="2">
    <location>
        <begin position="136"/>
        <end position="139"/>
    </location>
    <ligand>
        <name>GTP</name>
        <dbReference type="ChEBI" id="CHEBI:37565"/>
    </ligand>
</feature>
<organism>
    <name type="scientific">Kosmotoga olearia (strain ATCC BAA-1733 / DSM 21960 / TBF 19.5.1)</name>
    <dbReference type="NCBI Taxonomy" id="521045"/>
    <lineage>
        <taxon>Bacteria</taxon>
        <taxon>Thermotogati</taxon>
        <taxon>Thermotogota</taxon>
        <taxon>Thermotogae</taxon>
        <taxon>Kosmotogales</taxon>
        <taxon>Kosmotogaceae</taxon>
        <taxon>Kosmotoga</taxon>
    </lineage>
</organism>
<gene>
    <name evidence="2" type="primary">tuf</name>
    <name type="ordered locus">Kole_1904</name>
</gene>
<reference key="1">
    <citation type="submission" date="2009-06" db="EMBL/GenBank/DDBJ databases">
        <title>Complete sequence of Thermotogales bacterium TBF 19.5.1.</title>
        <authorList>
            <consortium name="US DOE Joint Genome Institute"/>
            <person name="Lucas S."/>
            <person name="Copeland A."/>
            <person name="Lapidus A."/>
            <person name="Glavina del Rio T."/>
            <person name="Tice H."/>
            <person name="Bruce D."/>
            <person name="Goodwin L."/>
            <person name="Pitluck S."/>
            <person name="Chertkov O."/>
            <person name="Brettin T."/>
            <person name="Detter J.C."/>
            <person name="Han C."/>
            <person name="Schmutz J."/>
            <person name="Larimer F."/>
            <person name="Land M."/>
            <person name="Hauser L."/>
            <person name="Kyrpides N."/>
            <person name="Ovchinnikova G."/>
            <person name="Noll K."/>
        </authorList>
    </citation>
    <scope>NUCLEOTIDE SEQUENCE [LARGE SCALE GENOMIC DNA]</scope>
    <source>
        <strain>ATCC BAA-1733 / DSM 21960 / TBF 19.5.1</strain>
    </source>
</reference>
<name>EFTU_KOSOT</name>
<comment type="function">
    <text evidence="2">GTP hydrolase that promotes the GTP-dependent binding of aminoacyl-tRNA to the A-site of ribosomes during protein biosynthesis.</text>
</comment>
<comment type="catalytic activity">
    <reaction evidence="2">
        <text>GTP + H2O = GDP + phosphate + H(+)</text>
        <dbReference type="Rhea" id="RHEA:19669"/>
        <dbReference type="ChEBI" id="CHEBI:15377"/>
        <dbReference type="ChEBI" id="CHEBI:15378"/>
        <dbReference type="ChEBI" id="CHEBI:37565"/>
        <dbReference type="ChEBI" id="CHEBI:43474"/>
        <dbReference type="ChEBI" id="CHEBI:58189"/>
        <dbReference type="EC" id="3.6.5.3"/>
    </reaction>
    <physiologicalReaction direction="left-to-right" evidence="2">
        <dbReference type="Rhea" id="RHEA:19670"/>
    </physiologicalReaction>
</comment>
<comment type="subunit">
    <text evidence="2">Monomer.</text>
</comment>
<comment type="subcellular location">
    <subcellularLocation>
        <location evidence="2">Cytoplasm</location>
    </subcellularLocation>
</comment>
<comment type="similarity">
    <text evidence="2">Belongs to the TRAFAC class translation factor GTPase superfamily. Classic translation factor GTPase family. EF-Tu/EF-1A subfamily.</text>
</comment>
<accession>C5CGR6</accession>
<sequence>MAKEKFERTKPHLNIGTIGHIDHGKTTLTAAITKALAYKGFADFTPFDAIDKAPEEKARGITINVTHVEYETEKRHYAHIDCPGHADYIKNMITGAAQMDGAILVVAATDGVMPQTREHVLLARQVNVPAMVVFINKVDMVDDEELVELVEEEVRDLLSKYEFPGDEVPVIKGSALMALEADNPDDPWVQKIYELMDAVDNYVPEPQRETDKPFLMPIEDIFSITGRGTVVTGRIERGVIHVGDEVEIVGLSYEVRKTVVTGVEMFRKLLDEGVAGDNVGCLLRGVGKDEVKRGQVLAKPGSITPHKKFKANIYVLKKEEGGRHTPFTKGYRPQFYIRTADVTGELVDLPEGVEMVMPGDNVVMTVELIYPVAIEKGMRFAVREGGRTVGAGVVSEIIE</sequence>
<proteinExistence type="inferred from homology"/>
<keyword id="KW-0963">Cytoplasm</keyword>
<keyword id="KW-0251">Elongation factor</keyword>
<keyword id="KW-0342">GTP-binding</keyword>
<keyword id="KW-0378">Hydrolase</keyword>
<keyword id="KW-0460">Magnesium</keyword>
<keyword id="KW-0479">Metal-binding</keyword>
<keyword id="KW-0547">Nucleotide-binding</keyword>
<keyword id="KW-0648">Protein biosynthesis</keyword>
<keyword id="KW-1185">Reference proteome</keyword>
<evidence type="ECO:0000250" key="1"/>
<evidence type="ECO:0000255" key="2">
    <source>
        <dbReference type="HAMAP-Rule" id="MF_00118"/>
    </source>
</evidence>
<dbReference type="EC" id="3.6.5.3" evidence="2"/>
<dbReference type="EMBL" id="CP001634">
    <property type="protein sequence ID" value="ACR80585.1"/>
    <property type="molecule type" value="Genomic_DNA"/>
</dbReference>
<dbReference type="RefSeq" id="WP_015869228.1">
    <property type="nucleotide sequence ID" value="NC_012785.1"/>
</dbReference>
<dbReference type="SMR" id="C5CGR6"/>
<dbReference type="STRING" id="521045.Kole_1904"/>
<dbReference type="KEGG" id="kol:Kole_1904"/>
<dbReference type="eggNOG" id="COG0050">
    <property type="taxonomic scope" value="Bacteria"/>
</dbReference>
<dbReference type="HOGENOM" id="CLU_007265_0_1_0"/>
<dbReference type="OrthoDB" id="9804504at2"/>
<dbReference type="Proteomes" id="UP000002382">
    <property type="component" value="Chromosome"/>
</dbReference>
<dbReference type="GO" id="GO:0005829">
    <property type="term" value="C:cytosol"/>
    <property type="evidence" value="ECO:0007669"/>
    <property type="project" value="TreeGrafter"/>
</dbReference>
<dbReference type="GO" id="GO:0005525">
    <property type="term" value="F:GTP binding"/>
    <property type="evidence" value="ECO:0007669"/>
    <property type="project" value="UniProtKB-UniRule"/>
</dbReference>
<dbReference type="GO" id="GO:0003924">
    <property type="term" value="F:GTPase activity"/>
    <property type="evidence" value="ECO:0007669"/>
    <property type="project" value="InterPro"/>
</dbReference>
<dbReference type="GO" id="GO:0003746">
    <property type="term" value="F:translation elongation factor activity"/>
    <property type="evidence" value="ECO:0007669"/>
    <property type="project" value="UniProtKB-UniRule"/>
</dbReference>
<dbReference type="CDD" id="cd01884">
    <property type="entry name" value="EF_Tu"/>
    <property type="match status" value="1"/>
</dbReference>
<dbReference type="CDD" id="cd03697">
    <property type="entry name" value="EFTU_II"/>
    <property type="match status" value="1"/>
</dbReference>
<dbReference type="CDD" id="cd03707">
    <property type="entry name" value="EFTU_III"/>
    <property type="match status" value="1"/>
</dbReference>
<dbReference type="FunFam" id="2.40.30.10:FF:000001">
    <property type="entry name" value="Elongation factor Tu"/>
    <property type="match status" value="1"/>
</dbReference>
<dbReference type="FunFam" id="3.40.50.300:FF:000003">
    <property type="entry name" value="Elongation factor Tu"/>
    <property type="match status" value="1"/>
</dbReference>
<dbReference type="Gene3D" id="3.40.50.300">
    <property type="entry name" value="P-loop containing nucleotide triphosphate hydrolases"/>
    <property type="match status" value="1"/>
</dbReference>
<dbReference type="Gene3D" id="2.40.30.10">
    <property type="entry name" value="Translation factors"/>
    <property type="match status" value="2"/>
</dbReference>
<dbReference type="HAMAP" id="MF_00118_B">
    <property type="entry name" value="EF_Tu_B"/>
    <property type="match status" value="1"/>
</dbReference>
<dbReference type="InterPro" id="IPR041709">
    <property type="entry name" value="EF-Tu_GTP-bd"/>
</dbReference>
<dbReference type="InterPro" id="IPR050055">
    <property type="entry name" value="EF-Tu_GTPase"/>
</dbReference>
<dbReference type="InterPro" id="IPR004161">
    <property type="entry name" value="EFTu-like_2"/>
</dbReference>
<dbReference type="InterPro" id="IPR033720">
    <property type="entry name" value="EFTU_2"/>
</dbReference>
<dbReference type="InterPro" id="IPR031157">
    <property type="entry name" value="G_TR_CS"/>
</dbReference>
<dbReference type="InterPro" id="IPR027417">
    <property type="entry name" value="P-loop_NTPase"/>
</dbReference>
<dbReference type="InterPro" id="IPR005225">
    <property type="entry name" value="Small_GTP-bd"/>
</dbReference>
<dbReference type="InterPro" id="IPR000795">
    <property type="entry name" value="T_Tr_GTP-bd_dom"/>
</dbReference>
<dbReference type="InterPro" id="IPR009000">
    <property type="entry name" value="Transl_B-barrel_sf"/>
</dbReference>
<dbReference type="InterPro" id="IPR009001">
    <property type="entry name" value="Transl_elong_EF1A/Init_IF2_C"/>
</dbReference>
<dbReference type="InterPro" id="IPR004541">
    <property type="entry name" value="Transl_elong_EFTu/EF1A_bac/org"/>
</dbReference>
<dbReference type="InterPro" id="IPR004160">
    <property type="entry name" value="Transl_elong_EFTu/EF1A_C"/>
</dbReference>
<dbReference type="NCBIfam" id="TIGR00485">
    <property type="entry name" value="EF-Tu"/>
    <property type="match status" value="1"/>
</dbReference>
<dbReference type="NCBIfam" id="NF000766">
    <property type="entry name" value="PRK00049.1"/>
    <property type="match status" value="1"/>
</dbReference>
<dbReference type="NCBIfam" id="NF009372">
    <property type="entry name" value="PRK12735.1"/>
    <property type="match status" value="1"/>
</dbReference>
<dbReference type="NCBIfam" id="NF009373">
    <property type="entry name" value="PRK12736.1"/>
    <property type="match status" value="1"/>
</dbReference>
<dbReference type="NCBIfam" id="TIGR00231">
    <property type="entry name" value="small_GTP"/>
    <property type="match status" value="1"/>
</dbReference>
<dbReference type="PANTHER" id="PTHR43721:SF22">
    <property type="entry name" value="ELONGATION FACTOR TU, MITOCHONDRIAL"/>
    <property type="match status" value="1"/>
</dbReference>
<dbReference type="PANTHER" id="PTHR43721">
    <property type="entry name" value="ELONGATION FACTOR TU-RELATED"/>
    <property type="match status" value="1"/>
</dbReference>
<dbReference type="Pfam" id="PF00009">
    <property type="entry name" value="GTP_EFTU"/>
    <property type="match status" value="1"/>
</dbReference>
<dbReference type="Pfam" id="PF03144">
    <property type="entry name" value="GTP_EFTU_D2"/>
    <property type="match status" value="1"/>
</dbReference>
<dbReference type="Pfam" id="PF03143">
    <property type="entry name" value="GTP_EFTU_D3"/>
    <property type="match status" value="1"/>
</dbReference>
<dbReference type="PRINTS" id="PR00315">
    <property type="entry name" value="ELONGATNFCT"/>
</dbReference>
<dbReference type="SUPFAM" id="SSF50465">
    <property type="entry name" value="EF-Tu/eEF-1alpha/eIF2-gamma C-terminal domain"/>
    <property type="match status" value="1"/>
</dbReference>
<dbReference type="SUPFAM" id="SSF52540">
    <property type="entry name" value="P-loop containing nucleoside triphosphate hydrolases"/>
    <property type="match status" value="1"/>
</dbReference>
<dbReference type="SUPFAM" id="SSF50447">
    <property type="entry name" value="Translation proteins"/>
    <property type="match status" value="1"/>
</dbReference>
<dbReference type="PROSITE" id="PS00301">
    <property type="entry name" value="G_TR_1"/>
    <property type="match status" value="1"/>
</dbReference>
<dbReference type="PROSITE" id="PS51722">
    <property type="entry name" value="G_TR_2"/>
    <property type="match status" value="1"/>
</dbReference>
<protein>
    <recommendedName>
        <fullName evidence="2">Elongation factor Tu</fullName>
        <shortName evidence="2">EF-Tu</shortName>
        <ecNumber evidence="2">3.6.5.3</ecNumber>
    </recommendedName>
</protein>